<organism>
    <name type="scientific">Exiguobacterium sp. (strain ATCC BAA-1283 / AT1b)</name>
    <dbReference type="NCBI Taxonomy" id="360911"/>
    <lineage>
        <taxon>Bacteria</taxon>
        <taxon>Bacillati</taxon>
        <taxon>Bacillota</taxon>
        <taxon>Bacilli</taxon>
        <taxon>Bacillales</taxon>
        <taxon>Bacillales Family XII. Incertae Sedis</taxon>
        <taxon>Exiguobacterium</taxon>
    </lineage>
</organism>
<sequence length="208" mass="22124">MAKGILGTKLGMTQIFNEAGEVVPVTVVAVEGNVVLQLKTVDTDGYEAVQLGFGDIKESRQNKPSKGHAAKANATPKRFIKEVRTSVEGYEIGQEIKADIFAAGELVDVTGTSKGKGFQGAIKRHGQSRGPMAHGSRYHRRPGSMGPVAPNRVFKGKLLPGQMGGERKTIQNLEVVKVDVERGLLLVKGAIPGARKSNVIIKSAVKGN</sequence>
<comment type="function">
    <text evidence="1">One of the primary rRNA binding proteins, it binds directly near the 3'-end of the 23S rRNA, where it nucleates assembly of the 50S subunit.</text>
</comment>
<comment type="subunit">
    <text evidence="1">Part of the 50S ribosomal subunit. Forms a cluster with proteins L14 and L19.</text>
</comment>
<comment type="similarity">
    <text evidence="1">Belongs to the universal ribosomal protein uL3 family.</text>
</comment>
<gene>
    <name evidence="1" type="primary">rplC</name>
    <name type="ordered locus">EAT1b_1633</name>
</gene>
<dbReference type="EMBL" id="CP001615">
    <property type="protein sequence ID" value="ACQ70559.1"/>
    <property type="molecule type" value="Genomic_DNA"/>
</dbReference>
<dbReference type="RefSeq" id="WP_012727677.1">
    <property type="nucleotide sequence ID" value="NC_012673.1"/>
</dbReference>
<dbReference type="SMR" id="C4KZP6"/>
<dbReference type="STRING" id="360911.EAT1b_1633"/>
<dbReference type="GeneID" id="94370743"/>
<dbReference type="KEGG" id="eat:EAT1b_1633"/>
<dbReference type="eggNOG" id="COG0087">
    <property type="taxonomic scope" value="Bacteria"/>
</dbReference>
<dbReference type="HOGENOM" id="CLU_044142_4_1_9"/>
<dbReference type="OrthoDB" id="9806135at2"/>
<dbReference type="Proteomes" id="UP000000716">
    <property type="component" value="Chromosome"/>
</dbReference>
<dbReference type="GO" id="GO:0022625">
    <property type="term" value="C:cytosolic large ribosomal subunit"/>
    <property type="evidence" value="ECO:0007669"/>
    <property type="project" value="TreeGrafter"/>
</dbReference>
<dbReference type="GO" id="GO:0019843">
    <property type="term" value="F:rRNA binding"/>
    <property type="evidence" value="ECO:0007669"/>
    <property type="project" value="UniProtKB-UniRule"/>
</dbReference>
<dbReference type="GO" id="GO:0003735">
    <property type="term" value="F:structural constituent of ribosome"/>
    <property type="evidence" value="ECO:0007669"/>
    <property type="project" value="InterPro"/>
</dbReference>
<dbReference type="GO" id="GO:0006412">
    <property type="term" value="P:translation"/>
    <property type="evidence" value="ECO:0007669"/>
    <property type="project" value="UniProtKB-UniRule"/>
</dbReference>
<dbReference type="FunFam" id="2.40.30.10:FF:000004">
    <property type="entry name" value="50S ribosomal protein L3"/>
    <property type="match status" value="1"/>
</dbReference>
<dbReference type="FunFam" id="3.30.160.810:FF:000002">
    <property type="entry name" value="50S ribosomal protein L3"/>
    <property type="match status" value="1"/>
</dbReference>
<dbReference type="Gene3D" id="3.30.160.810">
    <property type="match status" value="1"/>
</dbReference>
<dbReference type="Gene3D" id="2.40.30.10">
    <property type="entry name" value="Translation factors"/>
    <property type="match status" value="1"/>
</dbReference>
<dbReference type="HAMAP" id="MF_01325_B">
    <property type="entry name" value="Ribosomal_uL3_B"/>
    <property type="match status" value="1"/>
</dbReference>
<dbReference type="InterPro" id="IPR000597">
    <property type="entry name" value="Ribosomal_uL3"/>
</dbReference>
<dbReference type="InterPro" id="IPR019927">
    <property type="entry name" value="Ribosomal_uL3_bac/org-type"/>
</dbReference>
<dbReference type="InterPro" id="IPR019926">
    <property type="entry name" value="Ribosomal_uL3_CS"/>
</dbReference>
<dbReference type="InterPro" id="IPR009000">
    <property type="entry name" value="Transl_B-barrel_sf"/>
</dbReference>
<dbReference type="NCBIfam" id="TIGR03625">
    <property type="entry name" value="L3_bact"/>
    <property type="match status" value="1"/>
</dbReference>
<dbReference type="PANTHER" id="PTHR11229">
    <property type="entry name" value="50S RIBOSOMAL PROTEIN L3"/>
    <property type="match status" value="1"/>
</dbReference>
<dbReference type="PANTHER" id="PTHR11229:SF16">
    <property type="entry name" value="LARGE RIBOSOMAL SUBUNIT PROTEIN UL3C"/>
    <property type="match status" value="1"/>
</dbReference>
<dbReference type="Pfam" id="PF00297">
    <property type="entry name" value="Ribosomal_L3"/>
    <property type="match status" value="1"/>
</dbReference>
<dbReference type="SUPFAM" id="SSF50447">
    <property type="entry name" value="Translation proteins"/>
    <property type="match status" value="1"/>
</dbReference>
<dbReference type="PROSITE" id="PS00474">
    <property type="entry name" value="RIBOSOMAL_L3"/>
    <property type="match status" value="1"/>
</dbReference>
<name>RL3_EXISA</name>
<reference key="1">
    <citation type="journal article" date="2011" name="J. Bacteriol.">
        <title>Complete genome sequence of the Thermophilic Bacterium Exiguobacterium sp. AT1b.</title>
        <authorList>
            <person name="Vishnivetskaya T.A."/>
            <person name="Lucas S."/>
            <person name="Copeland A."/>
            <person name="Lapidus A."/>
            <person name="Glavina del Rio T."/>
            <person name="Dalin E."/>
            <person name="Tice H."/>
            <person name="Bruce D.C."/>
            <person name="Goodwin L.A."/>
            <person name="Pitluck S."/>
            <person name="Saunders E."/>
            <person name="Brettin T."/>
            <person name="Detter C."/>
            <person name="Han C."/>
            <person name="Larimer F."/>
            <person name="Land M.L."/>
            <person name="Hauser L.J."/>
            <person name="Kyrpides N.C."/>
            <person name="Ovchinnikova G."/>
            <person name="Kathariou S."/>
            <person name="Ramaley R.F."/>
            <person name="Rodrigues D.F."/>
            <person name="Hendrix C."/>
            <person name="Richardson P."/>
            <person name="Tiedje J.M."/>
        </authorList>
    </citation>
    <scope>NUCLEOTIDE SEQUENCE [LARGE SCALE GENOMIC DNA]</scope>
    <source>
        <strain>ATCC BAA-1283 / AT1b</strain>
    </source>
</reference>
<feature type="chain" id="PRO_1000214509" description="Large ribosomal subunit protein uL3">
    <location>
        <begin position="1"/>
        <end position="208"/>
    </location>
</feature>
<feature type="region of interest" description="Disordered" evidence="2">
    <location>
        <begin position="117"/>
        <end position="149"/>
    </location>
</feature>
<proteinExistence type="inferred from homology"/>
<evidence type="ECO:0000255" key="1">
    <source>
        <dbReference type="HAMAP-Rule" id="MF_01325"/>
    </source>
</evidence>
<evidence type="ECO:0000256" key="2">
    <source>
        <dbReference type="SAM" id="MobiDB-lite"/>
    </source>
</evidence>
<evidence type="ECO:0000305" key="3"/>
<accession>C4KZP6</accession>
<keyword id="KW-0687">Ribonucleoprotein</keyword>
<keyword id="KW-0689">Ribosomal protein</keyword>
<keyword id="KW-0694">RNA-binding</keyword>
<keyword id="KW-0699">rRNA-binding</keyword>
<protein>
    <recommendedName>
        <fullName evidence="1">Large ribosomal subunit protein uL3</fullName>
    </recommendedName>
    <alternativeName>
        <fullName evidence="3">50S ribosomal protein L3</fullName>
    </alternativeName>
</protein>